<protein>
    <recommendedName>
        <fullName evidence="1">Cytochrome c-type biogenesis protein CcmE</fullName>
    </recommendedName>
    <alternativeName>
        <fullName evidence="1">Cytochrome c maturation protein E</fullName>
    </alternativeName>
    <alternativeName>
        <fullName evidence="1">Heme chaperone CcmE</fullName>
    </alternativeName>
</protein>
<evidence type="ECO:0000255" key="1">
    <source>
        <dbReference type="HAMAP-Rule" id="MF_01959"/>
    </source>
</evidence>
<evidence type="ECO:0000256" key="2">
    <source>
        <dbReference type="SAM" id="MobiDB-lite"/>
    </source>
</evidence>
<proteinExistence type="inferred from homology"/>
<feature type="chain" id="PRO_1000189051" description="Cytochrome c-type biogenesis protein CcmE">
    <location>
        <begin position="1"/>
        <end position="164"/>
    </location>
</feature>
<feature type="topological domain" description="Cytoplasmic" evidence="1">
    <location>
        <begin position="1"/>
        <end position="8"/>
    </location>
</feature>
<feature type="transmembrane region" description="Helical; Signal-anchor for type II membrane protein" evidence="1">
    <location>
        <begin position="9"/>
        <end position="29"/>
    </location>
</feature>
<feature type="topological domain" description="Periplasmic" evidence="1">
    <location>
        <begin position="30"/>
        <end position="164"/>
    </location>
</feature>
<feature type="region of interest" description="Disordered" evidence="2">
    <location>
        <begin position="140"/>
        <end position="164"/>
    </location>
</feature>
<feature type="compositionally biased region" description="Basic and acidic residues" evidence="2">
    <location>
        <begin position="147"/>
        <end position="158"/>
    </location>
</feature>
<feature type="binding site" description="covalent" evidence="1">
    <location>
        <position position="131"/>
    </location>
    <ligand>
        <name>heme</name>
        <dbReference type="ChEBI" id="CHEBI:30413"/>
    </ligand>
</feature>
<feature type="binding site" description="axial binding residue" evidence="1">
    <location>
        <position position="135"/>
    </location>
    <ligand>
        <name>heme</name>
        <dbReference type="ChEBI" id="CHEBI:30413"/>
    </ligand>
    <ligandPart>
        <name>Fe</name>
        <dbReference type="ChEBI" id="CHEBI:18248"/>
    </ligandPart>
</feature>
<gene>
    <name evidence="1" type="primary">ccmE</name>
    <name evidence="1" type="synonym">cycJ</name>
    <name type="ordered locus">swp_2039</name>
</gene>
<name>CCME_SHEPW</name>
<comment type="function">
    <text evidence="1">Heme chaperone required for the biogenesis of c-type cytochromes. Transiently binds heme delivered by CcmC and transfers the heme to apo-cytochromes in a process facilitated by CcmF and CcmH.</text>
</comment>
<comment type="subcellular location">
    <subcellularLocation>
        <location evidence="1">Cell inner membrane</location>
        <topology evidence="1">Single-pass type II membrane protein</topology>
        <orientation evidence="1">Periplasmic side</orientation>
    </subcellularLocation>
</comment>
<comment type="similarity">
    <text evidence="1">Belongs to the CcmE/CycJ family.</text>
</comment>
<dbReference type="EMBL" id="CP000472">
    <property type="protein sequence ID" value="ACJ28795.1"/>
    <property type="molecule type" value="Genomic_DNA"/>
</dbReference>
<dbReference type="RefSeq" id="WP_020912158.1">
    <property type="nucleotide sequence ID" value="NC_011566.1"/>
</dbReference>
<dbReference type="SMR" id="B8CNG1"/>
<dbReference type="STRING" id="225849.swp_2039"/>
<dbReference type="KEGG" id="swp:swp_2039"/>
<dbReference type="eggNOG" id="COG2332">
    <property type="taxonomic scope" value="Bacteria"/>
</dbReference>
<dbReference type="HOGENOM" id="CLU_079503_1_0_6"/>
<dbReference type="OrthoDB" id="9793584at2"/>
<dbReference type="Proteomes" id="UP000000753">
    <property type="component" value="Chromosome"/>
</dbReference>
<dbReference type="GO" id="GO:0005886">
    <property type="term" value="C:plasma membrane"/>
    <property type="evidence" value="ECO:0007669"/>
    <property type="project" value="UniProtKB-SubCell"/>
</dbReference>
<dbReference type="GO" id="GO:0020037">
    <property type="term" value="F:heme binding"/>
    <property type="evidence" value="ECO:0007669"/>
    <property type="project" value="InterPro"/>
</dbReference>
<dbReference type="GO" id="GO:0046872">
    <property type="term" value="F:metal ion binding"/>
    <property type="evidence" value="ECO:0007669"/>
    <property type="project" value="UniProtKB-KW"/>
</dbReference>
<dbReference type="GO" id="GO:0017004">
    <property type="term" value="P:cytochrome complex assembly"/>
    <property type="evidence" value="ECO:0007669"/>
    <property type="project" value="UniProtKB-KW"/>
</dbReference>
<dbReference type="FunFam" id="2.40.50.140:FF:000104">
    <property type="entry name" value="Cytochrome c-type biogenesis protein CcmE"/>
    <property type="match status" value="1"/>
</dbReference>
<dbReference type="Gene3D" id="2.40.50.140">
    <property type="entry name" value="Nucleic acid-binding proteins"/>
    <property type="match status" value="1"/>
</dbReference>
<dbReference type="HAMAP" id="MF_01959">
    <property type="entry name" value="CcmE"/>
    <property type="match status" value="1"/>
</dbReference>
<dbReference type="InterPro" id="IPR004329">
    <property type="entry name" value="CcmE"/>
</dbReference>
<dbReference type="InterPro" id="IPR036127">
    <property type="entry name" value="CcmE-like_sf"/>
</dbReference>
<dbReference type="InterPro" id="IPR012340">
    <property type="entry name" value="NA-bd_OB-fold"/>
</dbReference>
<dbReference type="NCBIfam" id="NF009638">
    <property type="entry name" value="PRK13165.1"/>
    <property type="match status" value="1"/>
</dbReference>
<dbReference type="NCBIfam" id="NF009729">
    <property type="entry name" value="PRK13254.1-3"/>
    <property type="match status" value="1"/>
</dbReference>
<dbReference type="PANTHER" id="PTHR34128">
    <property type="entry name" value="CYTOCHROME C-TYPE BIOGENESIS PROTEIN CCME HOMOLOG, MITOCHONDRIAL"/>
    <property type="match status" value="1"/>
</dbReference>
<dbReference type="PANTHER" id="PTHR34128:SF2">
    <property type="entry name" value="CYTOCHROME C-TYPE BIOGENESIS PROTEIN CCME HOMOLOG, MITOCHONDRIAL"/>
    <property type="match status" value="1"/>
</dbReference>
<dbReference type="Pfam" id="PF03100">
    <property type="entry name" value="CcmE"/>
    <property type="match status" value="1"/>
</dbReference>
<dbReference type="SUPFAM" id="SSF82093">
    <property type="entry name" value="Heme chaperone CcmE"/>
    <property type="match status" value="1"/>
</dbReference>
<organism>
    <name type="scientific">Shewanella piezotolerans (strain WP3 / JCM 13877)</name>
    <dbReference type="NCBI Taxonomy" id="225849"/>
    <lineage>
        <taxon>Bacteria</taxon>
        <taxon>Pseudomonadati</taxon>
        <taxon>Pseudomonadota</taxon>
        <taxon>Gammaproteobacteria</taxon>
        <taxon>Alteromonadales</taxon>
        <taxon>Shewanellaceae</taxon>
        <taxon>Shewanella</taxon>
    </lineage>
</organism>
<sequence>MNPRRKKRLTLAVALIGGVAAIASLLLYALNSNLNLFFTPTEIVQGKKDTGVMPEIGQRIRVGGMVTIGSMVRDPDSLHVEFAVHDAAGGEIIVTYDDLLPDLFREGQGIVAQGVLSAPGKLEATEVLAKHDENYMPPEVAEAMGQSHEKLDYSEDQSKAGGYK</sequence>
<accession>B8CNG1</accession>
<keyword id="KW-0997">Cell inner membrane</keyword>
<keyword id="KW-1003">Cell membrane</keyword>
<keyword id="KW-0201">Cytochrome c-type biogenesis</keyword>
<keyword id="KW-0349">Heme</keyword>
<keyword id="KW-0408">Iron</keyword>
<keyword id="KW-0472">Membrane</keyword>
<keyword id="KW-0479">Metal-binding</keyword>
<keyword id="KW-0735">Signal-anchor</keyword>
<keyword id="KW-0812">Transmembrane</keyword>
<keyword id="KW-1133">Transmembrane helix</keyword>
<reference key="1">
    <citation type="journal article" date="2008" name="PLoS ONE">
        <title>Environmental adaptation: genomic analysis of the piezotolerant and psychrotolerant deep-sea iron reducing bacterium Shewanella piezotolerans WP3.</title>
        <authorList>
            <person name="Wang F."/>
            <person name="Wang J."/>
            <person name="Jian H."/>
            <person name="Zhang B."/>
            <person name="Li S."/>
            <person name="Wang F."/>
            <person name="Zeng X."/>
            <person name="Gao L."/>
            <person name="Bartlett D.H."/>
            <person name="Yu J."/>
            <person name="Hu S."/>
            <person name="Xiao X."/>
        </authorList>
    </citation>
    <scope>NUCLEOTIDE SEQUENCE [LARGE SCALE GENOMIC DNA]</scope>
    <source>
        <strain>WP3 / JCM 13877</strain>
    </source>
</reference>